<protein>
    <recommendedName>
        <fullName>Lysozyme</fullName>
        <ecNumber>3.2.1.17</ecNumber>
    </recommendedName>
    <alternativeName>
        <fullName>CP-7 lysin</fullName>
    </alternativeName>
    <alternativeName>
        <fullName>Endolysin</fullName>
    </alternativeName>
    <alternativeName>
        <fullName>Muramidase</fullName>
    </alternativeName>
</protein>
<sequence>MVKKNDLFVDVASHQGYDISGILEEAGTTNTIIKVSESTSYLNPCLSAQVSQSNPIGFYHFAWFGGNEEEAEAEARYFLDNVPTQVKYLVLDYEDHASASVQRNTTACLRFMQIIAEAGYTPIYYSYKPFTLDNVDYQQILAQFPNSLWIAGYGLNDGTANFEYFPSMDGIRWWQYSSNPFDKNIVLLDDEKEDNINNENTLKSLTTVANEVIQGLWGNGQERYDSLANAGYDPQAVQDKVNEILNAREIADLTTVANEVIQGLWGNGQERYDSLANAGYDPQAVQDKVNEILNAREIADLTTVANEVIQGLWGNGQERYDSLANAGYDPQAVQDKVNELLS</sequence>
<organismHost>
    <name type="scientific">Streptococcus pneumoniae</name>
    <dbReference type="NCBI Taxonomy" id="1313"/>
</organismHost>
<comment type="function">
    <text>Responsible for the separation of the host daughter cells at the end of cell division and participates in the liberation of progeny bacteriophage into the medium. Degrades cell walls containing either choline or ethanolamine.</text>
</comment>
<comment type="catalytic activity">
    <reaction>
        <text>Hydrolysis of (1-&gt;4)-beta-linkages between N-acetylmuramic acid and N-acetyl-D-glucosamine residues in a peptidoglycan and between N-acetyl-D-glucosamine residues in chitodextrins.</text>
        <dbReference type="EC" id="3.2.1.17"/>
    </reaction>
</comment>
<comment type="domain">
    <text>The C-terminal domain could be responsible for the substrate recognition.</text>
</comment>
<comment type="similarity">
    <text evidence="1 2">Belongs to the glycosyl hydrolase 25 family.</text>
</comment>
<organism>
    <name type="scientific">Streptococcus phage Cp-7</name>
    <name type="common">Bacteriophage Cp-7</name>
    <dbReference type="NCBI Taxonomy" id="10748"/>
    <lineage>
        <taxon>Viruses</taxon>
        <taxon>Duplodnaviria</taxon>
        <taxon>Heunggongvirae</taxon>
        <taxon>Uroviricota</taxon>
        <taxon>Caudoviricetes</taxon>
        <taxon>Salasmaviridae</taxon>
        <taxon>Cepunavirus</taxon>
        <taxon>Cepunavirus Cp7</taxon>
    </lineage>
</organism>
<name>LYS_BPCP7</name>
<gene>
    <name type="primary">CPL7</name>
</gene>
<feature type="chain" id="PRO_0000208260" description="Lysozyme">
    <location>
        <begin position="1"/>
        <end position="342"/>
    </location>
</feature>
<feature type="domain" description="Ch-type lysozyme" evidence="1">
    <location>
        <begin position="5"/>
        <end position="210"/>
    </location>
</feature>
<feature type="repeat" description="1; truncated">
    <location>
        <begin position="205"/>
        <end position="242"/>
    </location>
</feature>
<feature type="repeat" description="2">
    <location>
        <begin position="243"/>
        <end position="290"/>
    </location>
</feature>
<feature type="repeat" description="3">
    <location>
        <begin position="291"/>
        <end position="338"/>
    </location>
</feature>
<feature type="region of interest" description="3 X 48 AA tandem repeats">
    <location>
        <begin position="205"/>
        <end position="338"/>
    </location>
</feature>
<feature type="active site" evidence="1">
    <location>
        <position position="10"/>
    </location>
</feature>
<feature type="active site" evidence="1">
    <location>
        <position position="92"/>
    </location>
</feature>
<feature type="active site" evidence="1">
    <location>
        <position position="94"/>
    </location>
</feature>
<feature type="helix" evidence="4">
    <location>
        <begin position="205"/>
        <end position="214"/>
    </location>
</feature>
<feature type="helix" evidence="4">
    <location>
        <begin position="220"/>
        <end position="229"/>
    </location>
</feature>
<feature type="helix" evidence="4">
    <location>
        <begin position="234"/>
        <end position="247"/>
    </location>
</feature>
<feature type="helix" evidence="3">
    <location>
        <begin position="254"/>
        <end position="262"/>
    </location>
</feature>
<feature type="turn" evidence="3">
    <location>
        <begin position="263"/>
        <end position="265"/>
    </location>
</feature>
<feature type="helix" evidence="3">
    <location>
        <begin position="269"/>
        <end position="277"/>
    </location>
</feature>
<feature type="helix" evidence="3">
    <location>
        <begin position="282"/>
        <end position="295"/>
    </location>
</feature>
<feature type="helix" evidence="4">
    <location>
        <begin position="301"/>
        <end position="310"/>
    </location>
</feature>
<feature type="turn" evidence="4">
    <location>
        <begin position="311"/>
        <end position="313"/>
    </location>
</feature>
<feature type="helix" evidence="4">
    <location>
        <begin position="317"/>
        <end position="326"/>
    </location>
</feature>
<feature type="helix" evidence="4">
    <location>
        <begin position="330"/>
        <end position="339"/>
    </location>
</feature>
<evidence type="ECO:0000255" key="1">
    <source>
        <dbReference type="PROSITE-ProRule" id="PRU01252"/>
    </source>
</evidence>
<evidence type="ECO:0000305" key="2"/>
<evidence type="ECO:0007829" key="3">
    <source>
        <dbReference type="PDB" id="4CVD"/>
    </source>
</evidence>
<evidence type="ECO:0007829" key="4">
    <source>
        <dbReference type="PDB" id="5I8L"/>
    </source>
</evidence>
<accession>P19385</accession>
<keyword id="KW-0002">3D-structure</keyword>
<keyword id="KW-0929">Antimicrobial</keyword>
<keyword id="KW-0081">Bacteriolytic enzyme</keyword>
<keyword id="KW-0326">Glycosidase</keyword>
<keyword id="KW-0378">Hydrolase</keyword>
<keyword id="KW-0677">Repeat</keyword>
<proteinExistence type="evidence at protein level"/>
<dbReference type="EC" id="3.2.1.17"/>
<dbReference type="EMBL" id="M34779">
    <property type="protein sequence ID" value="AAA72844.2"/>
    <property type="molecule type" value="Genomic_DNA"/>
</dbReference>
<dbReference type="PIR" id="JQ0437">
    <property type="entry name" value="MUBPC7"/>
</dbReference>
<dbReference type="PDB" id="4CVD">
    <property type="method" value="X-ray"/>
    <property type="resolution" value="1.67 A"/>
    <property type="chains" value="A=253-300"/>
</dbReference>
<dbReference type="PDB" id="5I8L">
    <property type="method" value="X-ray"/>
    <property type="resolution" value="2.80 A"/>
    <property type="chains" value="A=199-342"/>
</dbReference>
<dbReference type="PDBsum" id="4CVD"/>
<dbReference type="PDBsum" id="5I8L"/>
<dbReference type="SMR" id="P19385"/>
<dbReference type="CAZy" id="GH25">
    <property type="family name" value="Glycoside Hydrolase Family 25"/>
</dbReference>
<dbReference type="OrthoDB" id="5812at10239"/>
<dbReference type="EvolutionaryTrace" id="P19385"/>
<dbReference type="GO" id="GO:0003796">
    <property type="term" value="F:lysozyme activity"/>
    <property type="evidence" value="ECO:0007669"/>
    <property type="project" value="UniProtKB-EC"/>
</dbReference>
<dbReference type="GO" id="GO:0016052">
    <property type="term" value="P:carbohydrate catabolic process"/>
    <property type="evidence" value="ECO:0007669"/>
    <property type="project" value="TreeGrafter"/>
</dbReference>
<dbReference type="GO" id="GO:0016998">
    <property type="term" value="P:cell wall macromolecule catabolic process"/>
    <property type="evidence" value="ECO:0007669"/>
    <property type="project" value="InterPro"/>
</dbReference>
<dbReference type="GO" id="GO:0042742">
    <property type="term" value="P:defense response to bacterium"/>
    <property type="evidence" value="ECO:0007669"/>
    <property type="project" value="UniProtKB-KW"/>
</dbReference>
<dbReference type="GO" id="GO:0031640">
    <property type="term" value="P:killing of cells of another organism"/>
    <property type="evidence" value="ECO:0007669"/>
    <property type="project" value="UniProtKB-KW"/>
</dbReference>
<dbReference type="GO" id="GO:0009253">
    <property type="term" value="P:peptidoglycan catabolic process"/>
    <property type="evidence" value="ECO:0007669"/>
    <property type="project" value="InterPro"/>
</dbReference>
<dbReference type="Gene3D" id="3.20.20.80">
    <property type="entry name" value="Glycosidases"/>
    <property type="match status" value="1"/>
</dbReference>
<dbReference type="InterPro" id="IPR013168">
    <property type="entry name" value="Cpl_7_lyso_C"/>
</dbReference>
<dbReference type="InterPro" id="IPR002053">
    <property type="entry name" value="Glyco_hydro_25"/>
</dbReference>
<dbReference type="InterPro" id="IPR008270">
    <property type="entry name" value="Glyco_hydro_25_AS"/>
</dbReference>
<dbReference type="InterPro" id="IPR018077">
    <property type="entry name" value="Glyco_hydro_fam25_subgr"/>
</dbReference>
<dbReference type="InterPro" id="IPR017853">
    <property type="entry name" value="Glycoside_hydrolase_SF"/>
</dbReference>
<dbReference type="PANTHER" id="PTHR34135">
    <property type="entry name" value="LYSOZYME"/>
    <property type="match status" value="1"/>
</dbReference>
<dbReference type="PANTHER" id="PTHR34135:SF2">
    <property type="entry name" value="LYSOZYME"/>
    <property type="match status" value="1"/>
</dbReference>
<dbReference type="Pfam" id="PF08230">
    <property type="entry name" value="CW_7"/>
    <property type="match status" value="3"/>
</dbReference>
<dbReference type="Pfam" id="PF01183">
    <property type="entry name" value="Glyco_hydro_25"/>
    <property type="match status" value="1"/>
</dbReference>
<dbReference type="SMART" id="SM01095">
    <property type="entry name" value="Cpl-7"/>
    <property type="match status" value="3"/>
</dbReference>
<dbReference type="SMART" id="SM00641">
    <property type="entry name" value="Glyco_25"/>
    <property type="match status" value="1"/>
</dbReference>
<dbReference type="SUPFAM" id="SSF51445">
    <property type="entry name" value="(Trans)glycosidases"/>
    <property type="match status" value="1"/>
</dbReference>
<dbReference type="PROSITE" id="PS00953">
    <property type="entry name" value="GLYCOSYL_HYDROL_F25_1"/>
    <property type="match status" value="1"/>
</dbReference>
<dbReference type="PROSITE" id="PS51904">
    <property type="entry name" value="GLYCOSYL_HYDROL_F25_2"/>
    <property type="match status" value="1"/>
</dbReference>
<reference key="1">
    <citation type="journal article" date="1990" name="Gene">
        <title>Modular organization of the lytic enzymes of Streptococcus pneumoniae and its bacteriophages.</title>
        <authorList>
            <person name="Garcia P."/>
            <person name="Garcia J.L."/>
            <person name="Garcia E."/>
            <person name="Sanchez-Puelles J.M."/>
            <person name="Lopez R."/>
        </authorList>
    </citation>
    <scope>NUCLEOTIDE SEQUENCE [GENOMIC DNA]</scope>
</reference>
<reference key="2">
    <citation type="submission" date="2012-03" db="EMBL/GenBank/DDBJ databases">
        <authorList>
            <person name="Garcia P."/>
            <person name="Garcia J.L."/>
            <person name="Garcia E."/>
            <person name="Sanchez-Puelles J.M."/>
            <person name="Lopez R."/>
        </authorList>
    </citation>
    <scope>SEQUENCE REVISION TO 63; 114; 230; 278 AND 326</scope>
</reference>